<organism>
    <name type="scientific">Bos taurus</name>
    <name type="common">Bovine</name>
    <dbReference type="NCBI Taxonomy" id="9913"/>
    <lineage>
        <taxon>Eukaryota</taxon>
        <taxon>Metazoa</taxon>
        <taxon>Chordata</taxon>
        <taxon>Craniata</taxon>
        <taxon>Vertebrata</taxon>
        <taxon>Euteleostomi</taxon>
        <taxon>Mammalia</taxon>
        <taxon>Eutheria</taxon>
        <taxon>Laurasiatheria</taxon>
        <taxon>Artiodactyla</taxon>
        <taxon>Ruminantia</taxon>
        <taxon>Pecora</taxon>
        <taxon>Bovidae</taxon>
        <taxon>Bovinae</taxon>
        <taxon>Bos</taxon>
    </lineage>
</organism>
<comment type="function">
    <text evidence="3">E3 ubiquitin-protein ligase which ubiquitinates itself in cooperation with an E2 enzyme UBE2D2/UBC4 and serves as a targeting signal for proteasomal degradation. May play a role in regulation of neuronal functions. May act as a regulator of synaptic vesicle exocytosis by controlling the availability of SNAP25 for the SNARE complex formation.</text>
</comment>
<comment type="catalytic activity">
    <reaction evidence="3">
        <text>S-ubiquitinyl-[E2 ubiquitin-conjugating enzyme]-L-cysteine + [acceptor protein]-L-lysine = [E2 ubiquitin-conjugating enzyme]-L-cysteine + N(6)-ubiquitinyl-[acceptor protein]-L-lysine.</text>
        <dbReference type="EC" id="2.3.2.27"/>
    </reaction>
</comment>
<comment type="pathway">
    <text evidence="3">Protein modification; protein ubiquitination.</text>
</comment>
<comment type="subunit">
    <text evidence="2">Interacts with SNAP25.</text>
</comment>
<comment type="subcellular location">
    <subcellularLocation>
        <location evidence="3">Cytoplasm</location>
    </subcellularLocation>
    <subcellularLocation>
        <location evidence="3">Cell projection</location>
        <location evidence="3">Dendrite</location>
    </subcellularLocation>
    <subcellularLocation>
        <location evidence="2">Cytoplasmic vesicle</location>
        <location evidence="2">Secretory vesicle</location>
        <location evidence="2">Synaptic vesicle</location>
    </subcellularLocation>
    <subcellularLocation>
        <location evidence="2">Synapse</location>
    </subcellularLocation>
    <subcellularLocation>
        <location evidence="2">Cytoplasm</location>
        <location evidence="2">Cytoskeleton</location>
    </subcellularLocation>
    <text evidence="2 3">Enriched at synaptic terminals where it exists in a soluble form and a synaptic vesicle-associated form. Associated with the cytoskeleton (By similarity). Found in proximal dendrites of pyramidal neurons in the cerebral cortex and hippocampus, and Purkinje cells in the cerebellum (By similarity).</text>
</comment>
<comment type="domain">
    <text evidence="2">The coiled coil domain mediates the interaction with the N-terminal t-SNARE domain of SNAP25.</text>
</comment>
<comment type="PTM">
    <text evidence="3">Auto-ubiquitinated.</text>
</comment>
<comment type="similarity">
    <text evidence="10">Belongs to the TRIM/RBCC family.</text>
</comment>
<sequence>MEEMEEELKCPVCGSFYREPIILPCSHNICQACARNILVQTPESESPQSRRASGSGVSDYDYLDLDKMSLYSEADSGYGSYGGFASAPTTPCQKSPNGVRVFPPAMPPPATHLSPALASVPRNSCITCPQCHRSLILDDRGLRGFPKNRVLEGVIDRYQQSKAAALKCQLCEKAPKEATVMCEQCDVFYCDPCRLRCHPPRGPLAKHRLVPPAQGRVSRRLSPRKVSTCTDHELENHSMYCVQCKMPVCYQCLEEGKHSSHEVKALGAMWKLHKSQLSQALNGLSDRAKEAKEFLVQLRNMVQQIQENSVEFEACLVAQCDALIDALNRRKAQLLARVNKEHEHKLKVVRDQISHCTVKLRQTTGLMEYCLEVIKENDPSGFLQISDALIRRVHLTEDQWGKGTLTPRMTTDFDLSLDNSPLLQSIHQLDFVQMKASSPVPATPILQLEDCCTHNNSATLSWKQPPLSTVPAEGYILELDDGNGGQFREVYVGKETMCTVDGLHFNSTYNARIKAFNKTGVSQYSKTLVLQTSEVAWFAFDPGSAHSDIIFSNDNLTVTCSSYDDRVVLGKTGFSKGVHYWELTVDRYDNHPDPAFGVARIDVMKDVMLGKDDKAWAMYVDNNRSWFMHNNSHTNRTEGGITKGATIGVLLDFNRKTLTFFINDEQQGPIAFENVEGLFFPAVSLNRNVQVTLHTGLQVPDFYSSRASIA</sequence>
<reference key="1">
    <citation type="submission" date="2006-02" db="EMBL/GenBank/DDBJ databases">
        <authorList>
            <consortium name="NIH - Mammalian Gene Collection (MGC) project"/>
        </authorList>
    </citation>
    <scope>NUCLEOTIDE SEQUENCE [LARGE SCALE MRNA]</scope>
    <source>
        <strain>Hereford</strain>
        <tissue>Hypothalamus</tissue>
    </source>
</reference>
<gene>
    <name type="primary">TRIM9</name>
</gene>
<name>TRIM9_BOVIN</name>
<keyword id="KW-0966">Cell projection</keyword>
<keyword id="KW-0175">Coiled coil</keyword>
<keyword id="KW-0963">Cytoplasm</keyword>
<keyword id="KW-0968">Cytoplasmic vesicle</keyword>
<keyword id="KW-0206">Cytoskeleton</keyword>
<keyword id="KW-0479">Metal-binding</keyword>
<keyword id="KW-0597">Phosphoprotein</keyword>
<keyword id="KW-1185">Reference proteome</keyword>
<keyword id="KW-0677">Repeat</keyword>
<keyword id="KW-0770">Synapse</keyword>
<keyword id="KW-0808">Transferase</keyword>
<keyword id="KW-0832">Ubl conjugation</keyword>
<keyword id="KW-0833">Ubl conjugation pathway</keyword>
<keyword id="KW-0862">Zinc</keyword>
<keyword id="KW-0863">Zinc-finger</keyword>
<evidence type="ECO:0000250" key="1">
    <source>
        <dbReference type="UniProtKB" id="Q8C7M3"/>
    </source>
</evidence>
<evidence type="ECO:0000250" key="2">
    <source>
        <dbReference type="UniProtKB" id="Q91ZY8"/>
    </source>
</evidence>
<evidence type="ECO:0000250" key="3">
    <source>
        <dbReference type="UniProtKB" id="Q9C026"/>
    </source>
</evidence>
<evidence type="ECO:0000255" key="4"/>
<evidence type="ECO:0000255" key="5">
    <source>
        <dbReference type="PROSITE-ProRule" id="PRU00024"/>
    </source>
</evidence>
<evidence type="ECO:0000255" key="6">
    <source>
        <dbReference type="PROSITE-ProRule" id="PRU00175"/>
    </source>
</evidence>
<evidence type="ECO:0000255" key="7">
    <source>
        <dbReference type="PROSITE-ProRule" id="PRU00316"/>
    </source>
</evidence>
<evidence type="ECO:0000255" key="8">
    <source>
        <dbReference type="PROSITE-ProRule" id="PRU00548"/>
    </source>
</evidence>
<evidence type="ECO:0000255" key="9">
    <source>
        <dbReference type="PROSITE-ProRule" id="PRU00586"/>
    </source>
</evidence>
<evidence type="ECO:0000305" key="10"/>
<proteinExistence type="evidence at transcript level"/>
<accession>Q29RQ5</accession>
<protein>
    <recommendedName>
        <fullName>E3 ubiquitin-protein ligase TRIM9</fullName>
        <ecNumber evidence="3">2.3.2.27</ecNumber>
    </recommendedName>
    <alternativeName>
        <fullName evidence="10">RING-type E3 ubiquitin transferase TRIM9</fullName>
    </alternativeName>
    <alternativeName>
        <fullName>Tripartite motif-containing protein 9</fullName>
    </alternativeName>
</protein>
<feature type="chain" id="PRO_0000240608" description="E3 ubiquitin-protein ligase TRIM9">
    <location>
        <begin position="1"/>
        <end position="710"/>
    </location>
</feature>
<feature type="domain" description="COS" evidence="9">
    <location>
        <begin position="374"/>
        <end position="432"/>
    </location>
</feature>
<feature type="domain" description="Fibronectin type-III" evidence="7">
    <location>
        <begin position="440"/>
        <end position="535"/>
    </location>
</feature>
<feature type="domain" description="B30.2/SPRY" evidence="8">
    <location>
        <begin position="533"/>
        <end position="702"/>
    </location>
</feature>
<feature type="zinc finger region" description="RING-type" evidence="6">
    <location>
        <begin position="10"/>
        <end position="50"/>
    </location>
</feature>
<feature type="zinc finger region" description="B box-type 1" evidence="5">
    <location>
        <begin position="163"/>
        <end position="212"/>
    </location>
</feature>
<feature type="zinc finger region" description="B box-type 2" evidence="5">
    <location>
        <begin position="224"/>
        <end position="266"/>
    </location>
</feature>
<feature type="coiled-coil region" evidence="4">
    <location>
        <begin position="273"/>
        <end position="340"/>
    </location>
</feature>
<feature type="binding site" evidence="5">
    <location>
        <position position="168"/>
    </location>
    <ligand>
        <name>Zn(2+)</name>
        <dbReference type="ChEBI" id="CHEBI:29105"/>
        <label>1</label>
    </ligand>
</feature>
<feature type="binding site" evidence="5">
    <location>
        <position position="171"/>
    </location>
    <ligand>
        <name>Zn(2+)</name>
        <dbReference type="ChEBI" id="CHEBI:29105"/>
        <label>1</label>
    </ligand>
</feature>
<feature type="binding site" evidence="5">
    <location>
        <position position="193"/>
    </location>
    <ligand>
        <name>Zn(2+)</name>
        <dbReference type="ChEBI" id="CHEBI:29105"/>
        <label>1</label>
    </ligand>
</feature>
<feature type="binding site" evidence="5">
    <location>
        <position position="198"/>
    </location>
    <ligand>
        <name>Zn(2+)</name>
        <dbReference type="ChEBI" id="CHEBI:29105"/>
        <label>1</label>
    </ligand>
</feature>
<feature type="binding site" evidence="5">
    <location>
        <position position="229"/>
    </location>
    <ligand>
        <name>Zn(2+)</name>
        <dbReference type="ChEBI" id="CHEBI:29105"/>
        <label>2</label>
    </ligand>
</feature>
<feature type="binding site" evidence="5">
    <location>
        <position position="232"/>
    </location>
    <ligand>
        <name>Zn(2+)</name>
        <dbReference type="ChEBI" id="CHEBI:29105"/>
        <label>2</label>
    </ligand>
</feature>
<feature type="binding site" evidence="5">
    <location>
        <position position="252"/>
    </location>
    <ligand>
        <name>Zn(2+)</name>
        <dbReference type="ChEBI" id="CHEBI:29105"/>
        <label>2</label>
    </ligand>
</feature>
<feature type="binding site" evidence="5">
    <location>
        <position position="258"/>
    </location>
    <ligand>
        <name>Zn(2+)</name>
        <dbReference type="ChEBI" id="CHEBI:29105"/>
        <label>2</label>
    </ligand>
</feature>
<feature type="modified residue" description="Phosphothreonine" evidence="1">
    <location>
        <position position="41"/>
    </location>
</feature>
<feature type="modified residue" description="Phosphoserine" evidence="1">
    <location>
        <position position="44"/>
    </location>
</feature>
<feature type="modified residue" description="Phosphoserine" evidence="1">
    <location>
        <position position="46"/>
    </location>
</feature>
<feature type="modified residue" description="Phosphoserine" evidence="1">
    <location>
        <position position="49"/>
    </location>
</feature>
<feature type="modified residue" description="Phosphoserine" evidence="1">
    <location>
        <position position="53"/>
    </location>
</feature>
<dbReference type="EC" id="2.3.2.27" evidence="3"/>
<dbReference type="EMBL" id="BC114071">
    <property type="protein sequence ID" value="AAI14072.1"/>
    <property type="molecule type" value="mRNA"/>
</dbReference>
<dbReference type="RefSeq" id="NP_001070005.1">
    <property type="nucleotide sequence ID" value="NM_001076537.2"/>
</dbReference>
<dbReference type="FunCoup" id="Q29RQ5">
    <property type="interactions" value="1059"/>
</dbReference>
<dbReference type="STRING" id="9913.ENSBTAP00000042592"/>
<dbReference type="Ensembl" id="ENSBTAT00000013346.6">
    <property type="protein sequence ID" value="ENSBTAP00000013346.5"/>
    <property type="gene ID" value="ENSBTAG00000010103.7"/>
</dbReference>
<dbReference type="GeneID" id="767615"/>
<dbReference type="KEGG" id="bta:767615"/>
<dbReference type="CTD" id="114088"/>
<dbReference type="VEuPathDB" id="HostDB:ENSBTAG00000010103"/>
<dbReference type="VGNC" id="VGNC:36353">
    <property type="gene designation" value="TRIM9"/>
</dbReference>
<dbReference type="eggNOG" id="KOG4367">
    <property type="taxonomic scope" value="Eukaryota"/>
</dbReference>
<dbReference type="GeneTree" id="ENSGT00940000154071"/>
<dbReference type="HOGENOM" id="CLU_013137_19_2_1"/>
<dbReference type="InParanoid" id="Q29RQ5"/>
<dbReference type="OrthoDB" id="295536at2759"/>
<dbReference type="Reactome" id="R-BTA-983168">
    <property type="pathway name" value="Antigen processing: Ubiquitination &amp; Proteasome degradation"/>
</dbReference>
<dbReference type="UniPathway" id="UPA00143"/>
<dbReference type="Proteomes" id="UP000009136">
    <property type="component" value="Chromosome 10"/>
</dbReference>
<dbReference type="Bgee" id="ENSBTAG00000010103">
    <property type="expression patterns" value="Expressed in occipital lobe and 47 other cell types or tissues"/>
</dbReference>
<dbReference type="GO" id="GO:0005737">
    <property type="term" value="C:cytoplasm"/>
    <property type="evidence" value="ECO:0000250"/>
    <property type="project" value="UniProtKB"/>
</dbReference>
<dbReference type="GO" id="GO:0005856">
    <property type="term" value="C:cytoskeleton"/>
    <property type="evidence" value="ECO:0007669"/>
    <property type="project" value="UniProtKB-SubCell"/>
</dbReference>
<dbReference type="GO" id="GO:0030425">
    <property type="term" value="C:dendrite"/>
    <property type="evidence" value="ECO:0000250"/>
    <property type="project" value="UniProtKB"/>
</dbReference>
<dbReference type="GO" id="GO:0008021">
    <property type="term" value="C:synaptic vesicle"/>
    <property type="evidence" value="ECO:0007669"/>
    <property type="project" value="UniProtKB-SubCell"/>
</dbReference>
<dbReference type="GO" id="GO:0061630">
    <property type="term" value="F:ubiquitin protein ligase activity"/>
    <property type="evidence" value="ECO:0000250"/>
    <property type="project" value="UniProtKB"/>
</dbReference>
<dbReference type="GO" id="GO:0008270">
    <property type="term" value="F:zinc ion binding"/>
    <property type="evidence" value="ECO:0007669"/>
    <property type="project" value="UniProtKB-KW"/>
</dbReference>
<dbReference type="GO" id="GO:0043161">
    <property type="term" value="P:proteasome-mediated ubiquitin-dependent protein catabolic process"/>
    <property type="evidence" value="ECO:0000250"/>
    <property type="project" value="UniProtKB"/>
</dbReference>
<dbReference type="GO" id="GO:0016567">
    <property type="term" value="P:protein ubiquitination"/>
    <property type="evidence" value="ECO:0007669"/>
    <property type="project" value="UniProtKB-UniPathway"/>
</dbReference>
<dbReference type="CDD" id="cd19843">
    <property type="entry name" value="Bbox1_TRIM9_C-I"/>
    <property type="match status" value="1"/>
</dbReference>
<dbReference type="CDD" id="cd19826">
    <property type="entry name" value="Bbox2_TRIM9_C-I"/>
    <property type="match status" value="1"/>
</dbReference>
<dbReference type="CDD" id="cd00063">
    <property type="entry name" value="FN3"/>
    <property type="match status" value="1"/>
</dbReference>
<dbReference type="CDD" id="cd16755">
    <property type="entry name" value="RING-HC_TRIM9"/>
    <property type="match status" value="1"/>
</dbReference>
<dbReference type="CDD" id="cd12889">
    <property type="entry name" value="SPRY_PRY_TRIM67_9"/>
    <property type="match status" value="1"/>
</dbReference>
<dbReference type="FunFam" id="2.60.120.920:FF:000009">
    <property type="entry name" value="E3 ubiquitin-protein ligase TRIM9 isoform X1"/>
    <property type="match status" value="1"/>
</dbReference>
<dbReference type="FunFam" id="2.60.40.10:FF:000178">
    <property type="entry name" value="E3 ubiquitin-protein ligase TRIM9 isoform X1"/>
    <property type="match status" value="1"/>
</dbReference>
<dbReference type="FunFam" id="3.30.40.10:FF:000168">
    <property type="entry name" value="E3 ubiquitin-protein ligase TRIM9 isoform X1"/>
    <property type="match status" value="1"/>
</dbReference>
<dbReference type="FunFam" id="4.10.830.40:FF:000001">
    <property type="entry name" value="E3 ubiquitin-protein ligase TRIM9 isoform X1"/>
    <property type="match status" value="1"/>
</dbReference>
<dbReference type="FunFam" id="3.30.160.60:FF:000329">
    <property type="entry name" value="E3 ubiquitin-protein ligase TRIM9 isoform X2"/>
    <property type="match status" value="1"/>
</dbReference>
<dbReference type="FunFam" id="1.20.5.170:FF:000017">
    <property type="entry name" value="Putative E3 ubiquitin-protein ligase TRIM9"/>
    <property type="match status" value="1"/>
</dbReference>
<dbReference type="Gene3D" id="1.20.5.170">
    <property type="match status" value="1"/>
</dbReference>
<dbReference type="Gene3D" id="2.60.120.920">
    <property type="match status" value="1"/>
</dbReference>
<dbReference type="Gene3D" id="4.10.830.40">
    <property type="match status" value="1"/>
</dbReference>
<dbReference type="Gene3D" id="3.30.160.60">
    <property type="entry name" value="Classic Zinc Finger"/>
    <property type="match status" value="1"/>
</dbReference>
<dbReference type="Gene3D" id="2.60.40.10">
    <property type="entry name" value="Immunoglobulins"/>
    <property type="match status" value="1"/>
</dbReference>
<dbReference type="Gene3D" id="3.30.40.10">
    <property type="entry name" value="Zinc/RING finger domain, C3HC4 (zinc finger)"/>
    <property type="match status" value="1"/>
</dbReference>
<dbReference type="InterPro" id="IPR001870">
    <property type="entry name" value="B30.2/SPRY"/>
</dbReference>
<dbReference type="InterPro" id="IPR043136">
    <property type="entry name" value="B30.2/SPRY_sf"/>
</dbReference>
<dbReference type="InterPro" id="IPR003649">
    <property type="entry name" value="Bbox_C"/>
</dbReference>
<dbReference type="InterPro" id="IPR013320">
    <property type="entry name" value="ConA-like_dom_sf"/>
</dbReference>
<dbReference type="InterPro" id="IPR017903">
    <property type="entry name" value="COS_domain"/>
</dbReference>
<dbReference type="InterPro" id="IPR050617">
    <property type="entry name" value="E3_ligase_FN3/SPRY"/>
</dbReference>
<dbReference type="InterPro" id="IPR003961">
    <property type="entry name" value="FN3_dom"/>
</dbReference>
<dbReference type="InterPro" id="IPR036116">
    <property type="entry name" value="FN3_sf"/>
</dbReference>
<dbReference type="InterPro" id="IPR013783">
    <property type="entry name" value="Ig-like_fold"/>
</dbReference>
<dbReference type="InterPro" id="IPR003877">
    <property type="entry name" value="SPRY_dom"/>
</dbReference>
<dbReference type="InterPro" id="IPR049582">
    <property type="entry name" value="TRIM9_Bbox1"/>
</dbReference>
<dbReference type="InterPro" id="IPR027370">
    <property type="entry name" value="Znf-RING_euk"/>
</dbReference>
<dbReference type="InterPro" id="IPR000315">
    <property type="entry name" value="Znf_B-box"/>
</dbReference>
<dbReference type="InterPro" id="IPR001841">
    <property type="entry name" value="Znf_RING"/>
</dbReference>
<dbReference type="InterPro" id="IPR013083">
    <property type="entry name" value="Znf_RING/FYVE/PHD"/>
</dbReference>
<dbReference type="InterPro" id="IPR017907">
    <property type="entry name" value="Znf_RING_CS"/>
</dbReference>
<dbReference type="PANTHER" id="PTHR24099">
    <property type="entry name" value="E3 UBIQUITIN-PROTEIN LIGASE TRIM36-RELATED"/>
    <property type="match status" value="1"/>
</dbReference>
<dbReference type="PANTHER" id="PTHR24099:SF13">
    <property type="entry name" value="E3 UBIQUITIN-PROTEIN LIGASE TRIM9"/>
    <property type="match status" value="1"/>
</dbReference>
<dbReference type="Pfam" id="PF22586">
    <property type="entry name" value="ANCHR-like_BBOX"/>
    <property type="match status" value="1"/>
</dbReference>
<dbReference type="Pfam" id="PF00041">
    <property type="entry name" value="fn3"/>
    <property type="match status" value="1"/>
</dbReference>
<dbReference type="Pfam" id="PF00622">
    <property type="entry name" value="SPRY"/>
    <property type="match status" value="1"/>
</dbReference>
<dbReference type="Pfam" id="PF00643">
    <property type="entry name" value="zf-B_box"/>
    <property type="match status" value="1"/>
</dbReference>
<dbReference type="Pfam" id="PF13445">
    <property type="entry name" value="zf-RING_UBOX"/>
    <property type="match status" value="1"/>
</dbReference>
<dbReference type="SMART" id="SM00502">
    <property type="entry name" value="BBC"/>
    <property type="match status" value="1"/>
</dbReference>
<dbReference type="SMART" id="SM00336">
    <property type="entry name" value="BBOX"/>
    <property type="match status" value="2"/>
</dbReference>
<dbReference type="SMART" id="SM00060">
    <property type="entry name" value="FN3"/>
    <property type="match status" value="1"/>
</dbReference>
<dbReference type="SMART" id="SM00184">
    <property type="entry name" value="RING"/>
    <property type="match status" value="1"/>
</dbReference>
<dbReference type="SMART" id="SM00449">
    <property type="entry name" value="SPRY"/>
    <property type="match status" value="1"/>
</dbReference>
<dbReference type="SUPFAM" id="SSF57845">
    <property type="entry name" value="B-box zinc-binding domain"/>
    <property type="match status" value="1"/>
</dbReference>
<dbReference type="SUPFAM" id="SSF49899">
    <property type="entry name" value="Concanavalin A-like lectins/glucanases"/>
    <property type="match status" value="1"/>
</dbReference>
<dbReference type="SUPFAM" id="SSF49265">
    <property type="entry name" value="Fibronectin type III"/>
    <property type="match status" value="1"/>
</dbReference>
<dbReference type="SUPFAM" id="SSF57850">
    <property type="entry name" value="RING/U-box"/>
    <property type="match status" value="1"/>
</dbReference>
<dbReference type="PROSITE" id="PS50188">
    <property type="entry name" value="B302_SPRY"/>
    <property type="match status" value="1"/>
</dbReference>
<dbReference type="PROSITE" id="PS51262">
    <property type="entry name" value="COS"/>
    <property type="match status" value="1"/>
</dbReference>
<dbReference type="PROSITE" id="PS50853">
    <property type="entry name" value="FN3"/>
    <property type="match status" value="1"/>
</dbReference>
<dbReference type="PROSITE" id="PS50119">
    <property type="entry name" value="ZF_BBOX"/>
    <property type="match status" value="2"/>
</dbReference>
<dbReference type="PROSITE" id="PS00518">
    <property type="entry name" value="ZF_RING_1"/>
    <property type="match status" value="1"/>
</dbReference>
<dbReference type="PROSITE" id="PS50089">
    <property type="entry name" value="ZF_RING_2"/>
    <property type="match status" value="1"/>
</dbReference>